<evidence type="ECO:0000250" key="1"/>
<evidence type="ECO:0000250" key="2">
    <source>
        <dbReference type="UniProtKB" id="Q16533"/>
    </source>
</evidence>
<evidence type="ECO:0000256" key="3">
    <source>
        <dbReference type="SAM" id="MobiDB-lite"/>
    </source>
</evidence>
<sequence length="367" mass="42874">MGTPPGLQTDCEALLSRFQETDSVRFEAFTELWRNMKFGTIFCGRMRNLEKNMFTKEALALAWRYFLPPYTFQIRVGALYLLYGLYNTQLCQPKQKIRVALKDWDEVLKFQQDLVNAQHFDAAYIFRKLRLDRAFHFTAMPKLLSYRMKKKIHRAEVTEEFKDPSDRVMKLITSDVLEEMLNVHDHYQNMKRVISVDKSKPDKALSLIKDDFFDNIKNIVLEHQQWHKDRKNPSLKSKINDGEEKMEGNSQETERCERAESLAKIKSKAFSVVIQASKSRRHRQVKLDSSDCDSASGQGQVKATRKKEKKERLKPAGRKMSFRNKGNVQNIHKEDKPLSLSMPVITEEENESLSGTEFTASKKKRKH</sequence>
<reference key="1">
    <citation type="submission" date="2005-06" db="EMBL/GenBank/DDBJ databases">
        <title>DNA sequences of macaque genes expressed in brain or testis and its evolutionary implications.</title>
        <authorList>
            <consortium name="International consortium for macaque cDNA sequencing and analysis"/>
        </authorList>
    </citation>
    <scope>NUCLEOTIDE SEQUENCE [LARGE SCALE MRNA]</scope>
    <source>
        <tissue>Testis</tissue>
    </source>
</reference>
<comment type="function">
    <text evidence="1">Part of the SNAPc complex required for the transcription of both RNA polymerase II and III small-nuclear RNA genes. Binds to the proximal sequence element (PSE), a non-TATA-box basal promoter element common to these 2 types of genes. Recruits TBP and BRF2 to the U6 snRNA TATA box (By similarity).</text>
</comment>
<comment type="subunit">
    <text evidence="1">Part of the SNAPc complex composed of 5 subunits: SNAPC1, SNAPC2, SNAPC3, SNAPC4 and SNAPC5. SNAPC1 interacts with SNAPC3, SNAPC4 and TBP (By similarity).</text>
</comment>
<comment type="subcellular location">
    <subcellularLocation>
        <location evidence="1">Nucleus</location>
    </subcellularLocation>
</comment>
<feature type="chain" id="PRO_0000072018" description="snRNA-activating protein complex subunit 1">
    <location>
        <begin position="1"/>
        <end position="367"/>
    </location>
</feature>
<feature type="region of interest" description="SNAPC3-binding" evidence="1">
    <location>
        <begin position="1"/>
        <end position="168"/>
    </location>
</feature>
<feature type="region of interest" description="SNAPC4-binding" evidence="1">
    <location>
        <begin position="164"/>
        <end position="268"/>
    </location>
</feature>
<feature type="region of interest" description="Disordered" evidence="3">
    <location>
        <begin position="228"/>
        <end position="254"/>
    </location>
</feature>
<feature type="region of interest" description="Disordered" evidence="3">
    <location>
        <begin position="278"/>
        <end position="367"/>
    </location>
</feature>
<feature type="compositionally biased region" description="Basic and acidic residues" evidence="3">
    <location>
        <begin position="238"/>
        <end position="254"/>
    </location>
</feature>
<feature type="compositionally biased region" description="Polar residues" evidence="3">
    <location>
        <begin position="292"/>
        <end position="301"/>
    </location>
</feature>
<feature type="modified residue" description="Phosphoserine" evidence="2">
    <location>
        <position position="289"/>
    </location>
</feature>
<feature type="modified residue" description="Phosphoserine" evidence="2">
    <location>
        <position position="290"/>
    </location>
</feature>
<accession>Q4R6W9</accession>
<gene>
    <name type="primary">SNAPC1</name>
    <name type="ORF">QtsA-16981</name>
</gene>
<name>SNPC1_MACFA</name>
<protein>
    <recommendedName>
        <fullName>snRNA-activating protein complex subunit 1</fullName>
        <shortName>SNAPc subunit 1</shortName>
    </recommendedName>
    <alternativeName>
        <fullName>Small nuclear RNA-activating complex polypeptide 1</fullName>
    </alternativeName>
    <alternativeName>
        <fullName>snRNA-activating protein complex 43 kDa subunit</fullName>
        <shortName>SNAPc 43 kDa subunit</shortName>
    </alternativeName>
</protein>
<organism>
    <name type="scientific">Macaca fascicularis</name>
    <name type="common">Crab-eating macaque</name>
    <name type="synonym">Cynomolgus monkey</name>
    <dbReference type="NCBI Taxonomy" id="9541"/>
    <lineage>
        <taxon>Eukaryota</taxon>
        <taxon>Metazoa</taxon>
        <taxon>Chordata</taxon>
        <taxon>Craniata</taxon>
        <taxon>Vertebrata</taxon>
        <taxon>Euteleostomi</taxon>
        <taxon>Mammalia</taxon>
        <taxon>Eutheria</taxon>
        <taxon>Euarchontoglires</taxon>
        <taxon>Primates</taxon>
        <taxon>Haplorrhini</taxon>
        <taxon>Catarrhini</taxon>
        <taxon>Cercopithecidae</taxon>
        <taxon>Cercopithecinae</taxon>
        <taxon>Macaca</taxon>
    </lineage>
</organism>
<dbReference type="EMBL" id="AB169061">
    <property type="protein sequence ID" value="BAE01155.1"/>
    <property type="molecule type" value="mRNA"/>
</dbReference>
<dbReference type="RefSeq" id="NP_001272039.1">
    <property type="nucleotide sequence ID" value="NM_001285110.1"/>
</dbReference>
<dbReference type="RefSeq" id="XP_065404950.1">
    <property type="nucleotide sequence ID" value="XM_065548878.1"/>
</dbReference>
<dbReference type="SMR" id="Q4R6W9"/>
<dbReference type="STRING" id="9541.ENSMFAP00000023808"/>
<dbReference type="Ensembl" id="ENSMFAT00000097964.1">
    <property type="protein sequence ID" value="ENSMFAP00000054137.1"/>
    <property type="gene ID" value="ENSMFAG00000043540.2"/>
</dbReference>
<dbReference type="GeneID" id="101866969"/>
<dbReference type="VEuPathDB" id="HostDB:ENSMFAG00000043540"/>
<dbReference type="eggNOG" id="KOG4746">
    <property type="taxonomic scope" value="Eukaryota"/>
</dbReference>
<dbReference type="GeneTree" id="ENSGT00390000018691"/>
<dbReference type="OMA" id="RDDMQNV"/>
<dbReference type="Proteomes" id="UP000233100">
    <property type="component" value="Chromosome 7"/>
</dbReference>
<dbReference type="Bgee" id="ENSMFAG00000043540">
    <property type="expression patterns" value="Expressed in pituitary gland and 13 other cell types or tissues"/>
</dbReference>
<dbReference type="GO" id="GO:0005730">
    <property type="term" value="C:nucleolus"/>
    <property type="evidence" value="ECO:0007669"/>
    <property type="project" value="Ensembl"/>
</dbReference>
<dbReference type="GO" id="GO:0005654">
    <property type="term" value="C:nucleoplasm"/>
    <property type="evidence" value="ECO:0007669"/>
    <property type="project" value="Ensembl"/>
</dbReference>
<dbReference type="GO" id="GO:0019185">
    <property type="term" value="C:snRNA-activating protein complex"/>
    <property type="evidence" value="ECO:0007669"/>
    <property type="project" value="TreeGrafter"/>
</dbReference>
<dbReference type="GO" id="GO:0043565">
    <property type="term" value="F:sequence-specific DNA binding"/>
    <property type="evidence" value="ECO:0007669"/>
    <property type="project" value="TreeGrafter"/>
</dbReference>
<dbReference type="GO" id="GO:0042795">
    <property type="term" value="P:snRNA transcription by RNA polymerase II"/>
    <property type="evidence" value="ECO:0007669"/>
    <property type="project" value="TreeGrafter"/>
</dbReference>
<dbReference type="GO" id="GO:0042796">
    <property type="term" value="P:snRNA transcription by RNA polymerase III"/>
    <property type="evidence" value="ECO:0007669"/>
    <property type="project" value="TreeGrafter"/>
</dbReference>
<dbReference type="InterPro" id="IPR019188">
    <property type="entry name" value="SNAPC1"/>
</dbReference>
<dbReference type="PANTHER" id="PTHR15131">
    <property type="entry name" value="SMALL NUCLEAR RNA ACTIVATING COMPLEX, POLYPEPTIDE 1"/>
    <property type="match status" value="1"/>
</dbReference>
<dbReference type="PANTHER" id="PTHR15131:SF3">
    <property type="entry name" value="SNRNA-ACTIVATING PROTEIN COMPLEX SUBUNIT 1"/>
    <property type="match status" value="1"/>
</dbReference>
<dbReference type="Pfam" id="PF09808">
    <property type="entry name" value="SNAPC1"/>
    <property type="match status" value="1"/>
</dbReference>
<keyword id="KW-0238">DNA-binding</keyword>
<keyword id="KW-0539">Nucleus</keyword>
<keyword id="KW-0597">Phosphoprotein</keyword>
<keyword id="KW-1185">Reference proteome</keyword>
<keyword id="KW-0804">Transcription</keyword>
<keyword id="KW-0805">Transcription regulation</keyword>
<proteinExistence type="evidence at transcript level"/>